<feature type="chain" id="PRO_0000201555" description="Heme exporter protein C">
    <location>
        <begin position="1"/>
        <end position="246"/>
    </location>
</feature>
<feature type="transmembrane region" description="Helical" evidence="2">
    <location>
        <begin position="24"/>
        <end position="44"/>
    </location>
</feature>
<feature type="transmembrane region" description="Helical" evidence="2">
    <location>
        <begin position="64"/>
        <end position="84"/>
    </location>
</feature>
<feature type="transmembrane region" description="Helical" evidence="2">
    <location>
        <begin position="94"/>
        <end position="114"/>
    </location>
</feature>
<feature type="transmembrane region" description="Helical" evidence="2">
    <location>
        <begin position="129"/>
        <end position="149"/>
    </location>
</feature>
<feature type="transmembrane region" description="Helical" evidence="2">
    <location>
        <begin position="160"/>
        <end position="180"/>
    </location>
</feature>
<feature type="transmembrane region" description="Helical" evidence="2">
    <location>
        <begin position="197"/>
        <end position="217"/>
    </location>
</feature>
<proteinExistence type="inferred from homology"/>
<protein>
    <recommendedName>
        <fullName>Heme exporter protein C</fullName>
    </recommendedName>
    <alternativeName>
        <fullName>Cytochrome c-type biogenesis protein CcmC</fullName>
    </alternativeName>
</protein>
<accession>P45034</accession>
<name>CCMC_HAEIN</name>
<keyword id="KW-0997">Cell inner membrane</keyword>
<keyword id="KW-1003">Cell membrane</keyword>
<keyword id="KW-0201">Cytochrome c-type biogenesis</keyword>
<keyword id="KW-0472">Membrane</keyword>
<keyword id="KW-1185">Reference proteome</keyword>
<keyword id="KW-0812">Transmembrane</keyword>
<keyword id="KW-1133">Transmembrane helix</keyword>
<keyword id="KW-0813">Transport</keyword>
<dbReference type="EMBL" id="L42023">
    <property type="protein sequence ID" value="AAC22748.1"/>
    <property type="molecule type" value="Genomic_DNA"/>
</dbReference>
<dbReference type="PIR" id="G64166">
    <property type="entry name" value="G64166"/>
</dbReference>
<dbReference type="RefSeq" id="NP_439248.1">
    <property type="nucleotide sequence ID" value="NC_000907.1"/>
</dbReference>
<dbReference type="SMR" id="P45034"/>
<dbReference type="STRING" id="71421.HI_1091"/>
<dbReference type="EnsemblBacteria" id="AAC22748">
    <property type="protein sequence ID" value="AAC22748"/>
    <property type="gene ID" value="HI_1091"/>
</dbReference>
<dbReference type="KEGG" id="hin:HI_1091"/>
<dbReference type="PATRIC" id="fig|71421.8.peg.1136"/>
<dbReference type="eggNOG" id="COG0755">
    <property type="taxonomic scope" value="Bacteria"/>
</dbReference>
<dbReference type="HOGENOM" id="CLU_066538_2_0_6"/>
<dbReference type="OrthoDB" id="9778550at2"/>
<dbReference type="PhylomeDB" id="P45034"/>
<dbReference type="BioCyc" id="HINF71421:G1GJ1-1126-MONOMER"/>
<dbReference type="Proteomes" id="UP000000579">
    <property type="component" value="Chromosome"/>
</dbReference>
<dbReference type="GO" id="GO:0005886">
    <property type="term" value="C:plasma membrane"/>
    <property type="evidence" value="ECO:0000318"/>
    <property type="project" value="GO_Central"/>
</dbReference>
<dbReference type="GO" id="GO:0020037">
    <property type="term" value="F:heme binding"/>
    <property type="evidence" value="ECO:0007669"/>
    <property type="project" value="InterPro"/>
</dbReference>
<dbReference type="GO" id="GO:0015232">
    <property type="term" value="F:heme transmembrane transporter activity"/>
    <property type="evidence" value="ECO:0007669"/>
    <property type="project" value="InterPro"/>
</dbReference>
<dbReference type="GO" id="GO:0017004">
    <property type="term" value="P:cytochrome complex assembly"/>
    <property type="evidence" value="ECO:0007669"/>
    <property type="project" value="UniProtKB-KW"/>
</dbReference>
<dbReference type="InterPro" id="IPR002541">
    <property type="entry name" value="Cyt_c_assembly"/>
</dbReference>
<dbReference type="InterPro" id="IPR003557">
    <property type="entry name" value="Cyt_c_biogenesis_CcmC"/>
</dbReference>
<dbReference type="InterPro" id="IPR045062">
    <property type="entry name" value="Cyt_c_biogenesis_CcsA/CcmC"/>
</dbReference>
<dbReference type="NCBIfam" id="TIGR01191">
    <property type="entry name" value="ccmC"/>
    <property type="match status" value="1"/>
</dbReference>
<dbReference type="PANTHER" id="PTHR30071:SF1">
    <property type="entry name" value="CYTOCHROME B_B6 PROTEIN-RELATED"/>
    <property type="match status" value="1"/>
</dbReference>
<dbReference type="PANTHER" id="PTHR30071">
    <property type="entry name" value="HEME EXPORTER PROTEIN C"/>
    <property type="match status" value="1"/>
</dbReference>
<dbReference type="Pfam" id="PF01578">
    <property type="entry name" value="Cytochrom_C_asm"/>
    <property type="match status" value="1"/>
</dbReference>
<dbReference type="PRINTS" id="PR01386">
    <property type="entry name" value="CCMCBIOGNSIS"/>
</dbReference>
<sequence>MWKWLHPYAKPETQYRICGKLSPLFAFLTLVLLGVGIVWGLAFAPADYQQGNSFRIMYVHAPTAIWSMGVYGSMAIAAVVALVWQIKQAHLAMIAMAPIGALFTFLSLVTGAIWGKPMWGTWWVWDARLTAELILFFLYLGILALYSAFSDRNIGAKAAGILCITTVVILPIIHFSVEWWNTLHQGASITKLEKPSIAIPMLVPLILCIFGFLTLYIWLTLVRYRMELLKEDAKRPWVKALAQTLK</sequence>
<reference key="1">
    <citation type="journal article" date="1995" name="Science">
        <title>Whole-genome random sequencing and assembly of Haemophilus influenzae Rd.</title>
        <authorList>
            <person name="Fleischmann R.D."/>
            <person name="Adams M.D."/>
            <person name="White O."/>
            <person name="Clayton R.A."/>
            <person name="Kirkness E.F."/>
            <person name="Kerlavage A.R."/>
            <person name="Bult C.J."/>
            <person name="Tomb J.-F."/>
            <person name="Dougherty B.A."/>
            <person name="Merrick J.M."/>
            <person name="McKenney K."/>
            <person name="Sutton G.G."/>
            <person name="FitzHugh W."/>
            <person name="Fields C.A."/>
            <person name="Gocayne J.D."/>
            <person name="Scott J.D."/>
            <person name="Shirley R."/>
            <person name="Liu L.-I."/>
            <person name="Glodek A."/>
            <person name="Kelley J.M."/>
            <person name="Weidman J.F."/>
            <person name="Phillips C.A."/>
            <person name="Spriggs T."/>
            <person name="Hedblom E."/>
            <person name="Cotton M.D."/>
            <person name="Utterback T.R."/>
            <person name="Hanna M.C."/>
            <person name="Nguyen D.T."/>
            <person name="Saudek D.M."/>
            <person name="Brandon R.C."/>
            <person name="Fine L.D."/>
            <person name="Fritchman J.L."/>
            <person name="Fuhrmann J.L."/>
            <person name="Geoghagen N.S.M."/>
            <person name="Gnehm C.L."/>
            <person name="McDonald L.A."/>
            <person name="Small K.V."/>
            <person name="Fraser C.M."/>
            <person name="Smith H.O."/>
            <person name="Venter J.C."/>
        </authorList>
    </citation>
    <scope>NUCLEOTIDE SEQUENCE [LARGE SCALE GENOMIC DNA]</scope>
    <source>
        <strain>ATCC 51907 / DSM 11121 / KW20 / Rd</strain>
    </source>
</reference>
<comment type="function">
    <text evidence="1">Required for the export of heme to the periplasm for the biogenesis of c-type cytochromes.</text>
</comment>
<comment type="subcellular location">
    <subcellularLocation>
        <location evidence="3">Cell inner membrane</location>
        <topology evidence="3">Multi-pass membrane protein</topology>
    </subcellularLocation>
</comment>
<comment type="similarity">
    <text evidence="3">Belongs to the CcmC/CycZ/HelC family.</text>
</comment>
<evidence type="ECO:0000250" key="1"/>
<evidence type="ECO:0000255" key="2"/>
<evidence type="ECO:0000305" key="3"/>
<organism>
    <name type="scientific">Haemophilus influenzae (strain ATCC 51907 / DSM 11121 / KW20 / Rd)</name>
    <dbReference type="NCBI Taxonomy" id="71421"/>
    <lineage>
        <taxon>Bacteria</taxon>
        <taxon>Pseudomonadati</taxon>
        <taxon>Pseudomonadota</taxon>
        <taxon>Gammaproteobacteria</taxon>
        <taxon>Pasteurellales</taxon>
        <taxon>Pasteurellaceae</taxon>
        <taxon>Haemophilus</taxon>
    </lineage>
</organism>
<gene>
    <name type="primary">ccmC</name>
    <name type="ordered locus">HI_1091</name>
</gene>